<feature type="chain" id="PRO_0000077334" description="Type II restriction enzyme MjaIII">
    <location>
        <begin position="1"/>
        <end position="290"/>
    </location>
</feature>
<sequence>MNFEYIINSLLETIKTYNFFVDWEKIENNIKKIEKRLHILNYLIGKENFKEEFFELLKEYPEVITVFPILIAVRDNKITILNENMELETLEFKEKKYLTDEEIERYYKFFKETGLEDLLKNRKIKNLVDYVFGVEVGMDTNARKNRIGDLMENIVKKYIENLCKQNKNLDYIFQATKDKIKQKWGINLTLDKTNRKFDFAVFNKNTKKLYLIEVNFYSGGGSKLKATAGEYRSLNEFIKNNNNNVQFIWITDGKGWNTAKNPLKESFNSGVVILNLKMVKEGLLKEILTQ</sequence>
<evidence type="ECO:0000303" key="1">
    <source>
    </source>
</evidence>
<evidence type="ECO:0000305" key="2"/>
<name>T2M3_METJA</name>
<protein>
    <recommendedName>
        <fullName evidence="1">Type II restriction enzyme MjaIII</fullName>
        <shortName>R.MjaIII</shortName>
        <ecNumber>3.1.21.4</ecNumber>
    </recommendedName>
    <alternativeName>
        <fullName>Endonuclease MjaIII</fullName>
    </alternativeName>
    <alternativeName>
        <fullName>Type-2 restriction enzyme MjaIII</fullName>
    </alternativeName>
</protein>
<comment type="function">
    <text evidence="1">A P subtype restriction enzyme that recognizes the double-stranded sequence 5'-GATC-3'; the cleavage site is unknown.</text>
</comment>
<comment type="catalytic activity">
    <reaction>
        <text>Endonucleolytic cleavage of DNA to give specific double-stranded fragments with terminal 5'-phosphates.</text>
        <dbReference type="EC" id="3.1.21.4"/>
    </reaction>
</comment>
<comment type="similarity">
    <text evidence="2">Belongs to the DpnII type II restriction endonuclease family.</text>
</comment>
<reference key="1">
    <citation type="journal article" date="1996" name="Science">
        <title>Complete genome sequence of the methanogenic archaeon, Methanococcus jannaschii.</title>
        <authorList>
            <person name="Bult C.J."/>
            <person name="White O."/>
            <person name="Olsen G.J."/>
            <person name="Zhou L."/>
            <person name="Fleischmann R.D."/>
            <person name="Sutton G.G."/>
            <person name="Blake J.A."/>
            <person name="FitzGerald L.M."/>
            <person name="Clayton R.A."/>
            <person name="Gocayne J.D."/>
            <person name="Kerlavage A.R."/>
            <person name="Dougherty B.A."/>
            <person name="Tomb J.-F."/>
            <person name="Adams M.D."/>
            <person name="Reich C.I."/>
            <person name="Overbeek R."/>
            <person name="Kirkness E.F."/>
            <person name="Weinstock K.G."/>
            <person name="Merrick J.M."/>
            <person name="Glodek A."/>
            <person name="Scott J.L."/>
            <person name="Geoghagen N.S.M."/>
            <person name="Weidman J.F."/>
            <person name="Fuhrmann J.L."/>
            <person name="Nguyen D."/>
            <person name="Utterback T.R."/>
            <person name="Kelley J.M."/>
            <person name="Peterson J.D."/>
            <person name="Sadow P.W."/>
            <person name="Hanna M.C."/>
            <person name="Cotton M.D."/>
            <person name="Roberts K.M."/>
            <person name="Hurst M.A."/>
            <person name="Kaine B.P."/>
            <person name="Borodovsky M."/>
            <person name="Klenk H.-P."/>
            <person name="Fraser C.M."/>
            <person name="Smith H.O."/>
            <person name="Woese C.R."/>
            <person name="Venter J.C."/>
        </authorList>
    </citation>
    <scope>NUCLEOTIDE SEQUENCE [LARGE SCALE GENOMIC DNA]</scope>
    <source>
        <strain>ATCC 43067 / DSM 2661 / JAL-1 / JCM 10045 / NBRC 100440</strain>
    </source>
</reference>
<reference key="2">
    <citation type="patent" date="1999-03-11" number="WO9911821">
        <title>Method for screening restriction endonucleases.</title>
        <authorList>
            <person name="Noren C.J."/>
            <person name="Roberts R.J."/>
            <person name="Patti J."/>
            <person name="Byrd D.R."/>
            <person name="Morgan R.D."/>
        </authorList>
    </citation>
    <scope>CHARACTERIZATION</scope>
</reference>
<reference key="3">
    <citation type="journal article" date="2003" name="Nucleic Acids Res.">
        <title>A nomenclature for restriction enzymes, DNA methyltransferases, homing endonucleases and their genes.</title>
        <authorList>
            <person name="Roberts R.J."/>
            <person name="Belfort M."/>
            <person name="Bestor T."/>
            <person name="Bhagwat A.S."/>
            <person name="Bickle T.A."/>
            <person name="Bitinaite J."/>
            <person name="Blumenthal R.M."/>
            <person name="Degtyarev S.K."/>
            <person name="Dryden D.T."/>
            <person name="Dybvig K."/>
            <person name="Firman K."/>
            <person name="Gromova E.S."/>
            <person name="Gumport R.I."/>
            <person name="Halford S.E."/>
            <person name="Hattman S."/>
            <person name="Heitman J."/>
            <person name="Hornby D.P."/>
            <person name="Janulaitis A."/>
            <person name="Jeltsch A."/>
            <person name="Josephsen J."/>
            <person name="Kiss A."/>
            <person name="Klaenhammer T.R."/>
            <person name="Kobayashi I."/>
            <person name="Kong H."/>
            <person name="Krueger D.H."/>
            <person name="Lacks S."/>
            <person name="Marinus M.G."/>
            <person name="Miyahara M."/>
            <person name="Morgan R.D."/>
            <person name="Murray N.E."/>
            <person name="Nagaraja V."/>
            <person name="Piekarowicz A."/>
            <person name="Pingoud A."/>
            <person name="Raleigh E."/>
            <person name="Rao D.N."/>
            <person name="Reich N."/>
            <person name="Repin V.E."/>
            <person name="Selker E.U."/>
            <person name="Shaw P.C."/>
            <person name="Stein D.C."/>
            <person name="Stoddard B.L."/>
            <person name="Szybalski W."/>
            <person name="Trautner T.A."/>
            <person name="Van Etten J.L."/>
            <person name="Vitor J.M."/>
            <person name="Wilson G.G."/>
            <person name="Xu S.Y."/>
        </authorList>
    </citation>
    <scope>NOMENCLATURE</scope>
    <scope>SUBTYPE</scope>
</reference>
<accession>Q58017</accession>
<gene>
    <name type="primary">mjaIIIR</name>
    <name type="ordered locus">MJ0600</name>
</gene>
<proteinExistence type="evidence at protein level"/>
<dbReference type="EC" id="3.1.21.4"/>
<dbReference type="EMBL" id="L77117">
    <property type="protein sequence ID" value="AAB98591.1"/>
    <property type="molecule type" value="Genomic_DNA"/>
</dbReference>
<dbReference type="PIR" id="H64374">
    <property type="entry name" value="H64374"/>
</dbReference>
<dbReference type="RefSeq" id="WP_010870104.1">
    <property type="nucleotide sequence ID" value="NC_000909.1"/>
</dbReference>
<dbReference type="SMR" id="Q58017"/>
<dbReference type="STRING" id="243232.MJ_0600"/>
<dbReference type="REBASE" id="3891">
    <property type="entry name" value="MjaIII"/>
</dbReference>
<dbReference type="PaxDb" id="243232-MJ_0600"/>
<dbReference type="EnsemblBacteria" id="AAB98591">
    <property type="protein sequence ID" value="AAB98591"/>
    <property type="gene ID" value="MJ_0600"/>
</dbReference>
<dbReference type="GeneID" id="1451465"/>
<dbReference type="KEGG" id="mja:MJ_0600"/>
<dbReference type="eggNOG" id="arCOG06575">
    <property type="taxonomic scope" value="Archaea"/>
</dbReference>
<dbReference type="HOGENOM" id="CLU_089327_0_0_2"/>
<dbReference type="InParanoid" id="Q58017"/>
<dbReference type="OrthoDB" id="268803at2157"/>
<dbReference type="PhylomeDB" id="Q58017"/>
<dbReference type="PRO" id="PR:Q58017"/>
<dbReference type="Proteomes" id="UP000000805">
    <property type="component" value="Chromosome"/>
</dbReference>
<dbReference type="GO" id="GO:0003677">
    <property type="term" value="F:DNA binding"/>
    <property type="evidence" value="ECO:0007669"/>
    <property type="project" value="UniProtKB-KW"/>
</dbReference>
<dbReference type="GO" id="GO:0009036">
    <property type="term" value="F:type II site-specific deoxyribonuclease activity"/>
    <property type="evidence" value="ECO:0007669"/>
    <property type="project" value="UniProtKB-EC"/>
</dbReference>
<dbReference type="GO" id="GO:0009307">
    <property type="term" value="P:DNA restriction-modification system"/>
    <property type="evidence" value="ECO:0007669"/>
    <property type="project" value="UniProtKB-KW"/>
</dbReference>
<dbReference type="InterPro" id="IPR021191">
    <property type="entry name" value="Restrct_endonuc_II_DpnII"/>
</dbReference>
<dbReference type="InterPro" id="IPR007637">
    <property type="entry name" value="Restrct_endonuc_II_DpnII-like"/>
</dbReference>
<dbReference type="Pfam" id="PF04556">
    <property type="entry name" value="DpnII"/>
    <property type="match status" value="1"/>
</dbReference>
<dbReference type="PIRSF" id="PIRSF016080">
    <property type="entry name" value="Restrict_endonuc_II_DpmII"/>
    <property type="match status" value="1"/>
</dbReference>
<keyword id="KW-0238">DNA-binding</keyword>
<keyword id="KW-0255">Endonuclease</keyword>
<keyword id="KW-0378">Hydrolase</keyword>
<keyword id="KW-0540">Nuclease</keyword>
<keyword id="KW-1185">Reference proteome</keyword>
<keyword id="KW-0680">Restriction system</keyword>
<organism>
    <name type="scientific">Methanocaldococcus jannaschii (strain ATCC 43067 / DSM 2661 / JAL-1 / JCM 10045 / NBRC 100440)</name>
    <name type="common">Methanococcus jannaschii</name>
    <dbReference type="NCBI Taxonomy" id="243232"/>
    <lineage>
        <taxon>Archaea</taxon>
        <taxon>Methanobacteriati</taxon>
        <taxon>Methanobacteriota</taxon>
        <taxon>Methanomada group</taxon>
        <taxon>Methanococci</taxon>
        <taxon>Methanococcales</taxon>
        <taxon>Methanocaldococcaceae</taxon>
        <taxon>Methanocaldococcus</taxon>
    </lineage>
</organism>